<reference key="1">
    <citation type="journal article" date="2008" name="J. Biotechnol.">
        <title>The genome of Xanthomonas campestris pv. campestris B100 and its use for the reconstruction of metabolic pathways involved in xanthan biosynthesis.</title>
        <authorList>
            <person name="Vorhoelter F.-J."/>
            <person name="Schneiker S."/>
            <person name="Goesmann A."/>
            <person name="Krause L."/>
            <person name="Bekel T."/>
            <person name="Kaiser O."/>
            <person name="Linke B."/>
            <person name="Patschkowski T."/>
            <person name="Rueckert C."/>
            <person name="Schmid J."/>
            <person name="Sidhu V.K."/>
            <person name="Sieber V."/>
            <person name="Tauch A."/>
            <person name="Watt S.A."/>
            <person name="Weisshaar B."/>
            <person name="Becker A."/>
            <person name="Niehaus K."/>
            <person name="Puehler A."/>
        </authorList>
    </citation>
    <scope>NUCLEOTIDE SEQUENCE [LARGE SCALE GENOMIC DNA]</scope>
    <source>
        <strain>B100</strain>
    </source>
</reference>
<gene>
    <name evidence="1" type="primary">nuoC</name>
    <name type="ordered locus">xcc-b100_1635</name>
</gene>
<dbReference type="EC" id="7.1.1.-" evidence="1"/>
<dbReference type="EMBL" id="AM920689">
    <property type="protein sequence ID" value="CAP50985.1"/>
    <property type="molecule type" value="Genomic_DNA"/>
</dbReference>
<dbReference type="SMR" id="B0RRA0"/>
<dbReference type="KEGG" id="xca:xcc-b100_1635"/>
<dbReference type="HOGENOM" id="CLU_042628_2_1_6"/>
<dbReference type="Proteomes" id="UP000001188">
    <property type="component" value="Chromosome"/>
</dbReference>
<dbReference type="GO" id="GO:0005886">
    <property type="term" value="C:plasma membrane"/>
    <property type="evidence" value="ECO:0007669"/>
    <property type="project" value="UniProtKB-SubCell"/>
</dbReference>
<dbReference type="GO" id="GO:0008137">
    <property type="term" value="F:NADH dehydrogenase (ubiquinone) activity"/>
    <property type="evidence" value="ECO:0007669"/>
    <property type="project" value="InterPro"/>
</dbReference>
<dbReference type="GO" id="GO:0050136">
    <property type="term" value="F:NADH:ubiquinone reductase (non-electrogenic) activity"/>
    <property type="evidence" value="ECO:0007669"/>
    <property type="project" value="UniProtKB-UniRule"/>
</dbReference>
<dbReference type="GO" id="GO:0048038">
    <property type="term" value="F:quinone binding"/>
    <property type="evidence" value="ECO:0007669"/>
    <property type="project" value="UniProtKB-KW"/>
</dbReference>
<dbReference type="Gene3D" id="3.30.460.80">
    <property type="entry name" value="NADH:ubiquinone oxidoreductase, 30kDa subunit"/>
    <property type="match status" value="1"/>
</dbReference>
<dbReference type="HAMAP" id="MF_01357">
    <property type="entry name" value="NDH1_NuoC"/>
    <property type="match status" value="1"/>
</dbReference>
<dbReference type="InterPro" id="IPR010218">
    <property type="entry name" value="NADH_DH_suC"/>
</dbReference>
<dbReference type="InterPro" id="IPR037232">
    <property type="entry name" value="NADH_quin_OxRdtase_su_C/D-like"/>
</dbReference>
<dbReference type="InterPro" id="IPR001268">
    <property type="entry name" value="NADH_UbQ_OxRdtase_30kDa_su"/>
</dbReference>
<dbReference type="InterPro" id="IPR020396">
    <property type="entry name" value="NADH_UbQ_OxRdtase_CS"/>
</dbReference>
<dbReference type="NCBIfam" id="NF004730">
    <property type="entry name" value="PRK06074.1-1"/>
    <property type="match status" value="1"/>
</dbReference>
<dbReference type="NCBIfam" id="NF004732">
    <property type="entry name" value="PRK06074.1-4"/>
    <property type="match status" value="1"/>
</dbReference>
<dbReference type="PANTHER" id="PTHR10884:SF14">
    <property type="entry name" value="NADH DEHYDROGENASE [UBIQUINONE] IRON-SULFUR PROTEIN 3, MITOCHONDRIAL"/>
    <property type="match status" value="1"/>
</dbReference>
<dbReference type="PANTHER" id="PTHR10884">
    <property type="entry name" value="NADH DEHYDROGENASE UBIQUINONE IRON-SULFUR PROTEIN 3"/>
    <property type="match status" value="1"/>
</dbReference>
<dbReference type="Pfam" id="PF00329">
    <property type="entry name" value="Complex1_30kDa"/>
    <property type="match status" value="1"/>
</dbReference>
<dbReference type="SUPFAM" id="SSF143243">
    <property type="entry name" value="Nqo5-like"/>
    <property type="match status" value="1"/>
</dbReference>
<dbReference type="PROSITE" id="PS00542">
    <property type="entry name" value="COMPLEX1_30K"/>
    <property type="match status" value="1"/>
</dbReference>
<proteinExistence type="inferred from homology"/>
<protein>
    <recommendedName>
        <fullName evidence="1">NADH-quinone oxidoreductase subunit C</fullName>
        <ecNumber evidence="1">7.1.1.-</ecNumber>
    </recommendedName>
    <alternativeName>
        <fullName evidence="1">NADH dehydrogenase I subunit C</fullName>
    </alternativeName>
    <alternativeName>
        <fullName evidence="1">NDH-1 subunit C</fullName>
    </alternativeName>
</protein>
<keyword id="KW-0997">Cell inner membrane</keyword>
<keyword id="KW-1003">Cell membrane</keyword>
<keyword id="KW-0472">Membrane</keyword>
<keyword id="KW-0520">NAD</keyword>
<keyword id="KW-0874">Quinone</keyword>
<keyword id="KW-1278">Translocase</keyword>
<keyword id="KW-0813">Transport</keyword>
<keyword id="KW-0830">Ubiquinone</keyword>
<accession>B0RRA0</accession>
<organism>
    <name type="scientific">Xanthomonas campestris pv. campestris (strain B100)</name>
    <dbReference type="NCBI Taxonomy" id="509169"/>
    <lineage>
        <taxon>Bacteria</taxon>
        <taxon>Pseudomonadati</taxon>
        <taxon>Pseudomonadota</taxon>
        <taxon>Gammaproteobacteria</taxon>
        <taxon>Lysobacterales</taxon>
        <taxon>Lysobacteraceae</taxon>
        <taxon>Xanthomonas</taxon>
    </lineage>
</organism>
<evidence type="ECO:0000255" key="1">
    <source>
        <dbReference type="HAMAP-Rule" id="MF_01357"/>
    </source>
</evidence>
<sequence length="250" mass="27905">MAEQASSFTDRLAARFAGAQISVVQPRGEVTLEVAAAQWHATCLALRDELGFEQLSDLCGVDYLGYGSDEWDTADVSSQGFSRGVEGKALGRFAWGEFPSQESSNGAQPQQLPTQRFAVVAQLISYQHNQRLRVRCYAPDEQVPVVASLTDIWPGVNWFEREAFDLFGIVFDGHPDLRRILTDYGFVGHPFRKDFPLIGNVEVRYDDERKRVVYEPVTSVEPRVGVPRVIRDDARYETAAGEVGKSETAK</sequence>
<name>NUOC_XANCB</name>
<comment type="function">
    <text evidence="1">NDH-1 shuttles electrons from NADH, via FMN and iron-sulfur (Fe-S) centers, to quinones in the respiratory chain. The immediate electron acceptor for the enzyme in this species is believed to be ubiquinone. Couples the redox reaction to proton translocation (for every two electrons transferred, four hydrogen ions are translocated across the cytoplasmic membrane), and thus conserves the redox energy in a proton gradient.</text>
</comment>
<comment type="catalytic activity">
    <reaction evidence="1">
        <text>a quinone + NADH + 5 H(+)(in) = a quinol + NAD(+) + 4 H(+)(out)</text>
        <dbReference type="Rhea" id="RHEA:57888"/>
        <dbReference type="ChEBI" id="CHEBI:15378"/>
        <dbReference type="ChEBI" id="CHEBI:24646"/>
        <dbReference type="ChEBI" id="CHEBI:57540"/>
        <dbReference type="ChEBI" id="CHEBI:57945"/>
        <dbReference type="ChEBI" id="CHEBI:132124"/>
    </reaction>
</comment>
<comment type="subunit">
    <text evidence="1">NDH-1 is composed of 14 different subunits. Subunits NuoB, C, D, E, F, and G constitute the peripheral sector of the complex.</text>
</comment>
<comment type="subcellular location">
    <subcellularLocation>
        <location evidence="1">Cell inner membrane</location>
        <topology evidence="1">Peripheral membrane protein</topology>
        <orientation evidence="1">Cytoplasmic side</orientation>
    </subcellularLocation>
</comment>
<comment type="similarity">
    <text evidence="1">Belongs to the complex I 30 kDa subunit family.</text>
</comment>
<feature type="chain" id="PRO_0000358226" description="NADH-quinone oxidoreductase subunit C">
    <location>
        <begin position="1"/>
        <end position="250"/>
    </location>
</feature>